<proteinExistence type="inferred from homology"/>
<comment type="function">
    <text evidence="1">Hexosyltransferase involved in N-glycan biosynthetic pathway that takes place under low-salt conditions (1.75 M instead of 3.4 M). Participates in the formation of the tetrasaccharide present at 'Asn-532' of S-layer glycoprotein Csg, consisting of a sulfated hexose, 2 hexoses and rhamnose. Involved in the addition of final rhamnose (sugar 4) of the tetrasaccharide on the dolichol phosphate carrier.</text>
</comment>
<comment type="pathway">
    <text evidence="1">Protein modification; protein glycosylation.</text>
</comment>
<comment type="pathway">
    <text evidence="1">Cell surface structure biogenesis; S-layer biogenesis.</text>
</comment>
<comment type="disruption phenotype">
    <text evidence="1">Impaired formation of the tetrasaccharide present at 'Asn-532' of S-layer glycoprotein Csg. No effect on 'Asn-47' and 'Asn-117' glycosylation of S-layer glycoprotein Csg.</text>
</comment>
<comment type="similarity">
    <text evidence="2">Belongs to the glycosyltransferase 2 family.</text>
</comment>
<evidence type="ECO:0000269" key="1">
    <source>
    </source>
</evidence>
<evidence type="ECO:0000305" key="2"/>
<protein>
    <recommendedName>
        <fullName>Low-salt glycan biosynthesis hexosyltransferase Agl10</fullName>
        <ecNumber>2.4.1.-</ecNumber>
    </recommendedName>
    <alternativeName>
        <fullName>Archaeal glycosylation protein 10</fullName>
    </alternativeName>
</protein>
<accession>D4GU63</accession>
<reference key="1">
    <citation type="journal article" date="2010" name="PLoS ONE">
        <title>The complete genome sequence of Haloferax volcanii DS2, a model archaeon.</title>
        <authorList>
            <person name="Hartman A.L."/>
            <person name="Norais C."/>
            <person name="Badger J.H."/>
            <person name="Delmas S."/>
            <person name="Haldenby S."/>
            <person name="Madupu R."/>
            <person name="Robinson J."/>
            <person name="Khouri H."/>
            <person name="Ren Q."/>
            <person name="Lowe T.M."/>
            <person name="Maupin-Furlow J."/>
            <person name="Pohlschroder M."/>
            <person name="Daniels C."/>
            <person name="Pfeiffer F."/>
            <person name="Allers T."/>
            <person name="Eisen J.A."/>
        </authorList>
    </citation>
    <scope>NUCLEOTIDE SEQUENCE [LARGE SCALE GENOMIC DNA]</scope>
    <source>
        <strain>ATCC 29605 / DSM 3757 / JCM 8879 / NBRC 14742 / NCIMB 2012 / VKM B-1768 / DS2</strain>
    </source>
</reference>
<reference key="2">
    <citation type="journal article" date="2014" name="PLoS Genet.">
        <title>Phylogenetically driven sequencing of extremely halophilic archaea reveals strategies for static and dynamic osmo-response.</title>
        <authorList>
            <person name="Becker E.A."/>
            <person name="Seitzer P.M."/>
            <person name="Tritt A."/>
            <person name="Larsen D."/>
            <person name="Krusor M."/>
            <person name="Yao A.I."/>
            <person name="Wu D."/>
            <person name="Madern D."/>
            <person name="Eisen J.A."/>
            <person name="Darling A.E."/>
            <person name="Facciotti M.T."/>
        </authorList>
    </citation>
    <scope>NUCLEOTIDE SEQUENCE [LARGE SCALE GENOMIC DNA]</scope>
    <source>
        <strain>ATCC 29605 / DSM 3757 / JCM 8879 / NBRC 14742 / NCIMB 2012 / VKM B-1768 / DS2</strain>
    </source>
</reference>
<reference key="3">
    <citation type="journal article" date="2013" name="MBio">
        <title>Two distinct N-glycosylation pathways process the Haloferax volcanii S-layer glycoprotein upon changes in environmental salinity.</title>
        <authorList>
            <person name="Kaminski L."/>
            <person name="Guan Z."/>
            <person name="Yurist-Doutsch S."/>
            <person name="Eichler J."/>
        </authorList>
    </citation>
    <scope>FUNCTION</scope>
    <scope>PATHWAY</scope>
    <scope>DISRUPTION PHENOTYPE</scope>
    <source>
        <strain>ATCC 29605 / DSM 3757 / JCM 8879 / NBRC 14742 / NCIMB 2012 / VKM B-1768 / DS2</strain>
    </source>
</reference>
<keyword id="KW-0328">Glycosyltransferase</keyword>
<keyword id="KW-1185">Reference proteome</keyword>
<keyword id="KW-0808">Transferase</keyword>
<feature type="chain" id="PRO_0000428771" description="Low-salt glycan biosynthesis hexosyltransferase Agl10">
    <location>
        <begin position="1"/>
        <end position="307"/>
    </location>
</feature>
<dbReference type="EC" id="2.4.1.-"/>
<dbReference type="EMBL" id="CP001956">
    <property type="protein sequence ID" value="ADE02788.1"/>
    <property type="molecule type" value="Genomic_DNA"/>
</dbReference>
<dbReference type="EMBL" id="AOHU01000038">
    <property type="protein sequence ID" value="ELY34565.1"/>
    <property type="molecule type" value="Genomic_DNA"/>
</dbReference>
<dbReference type="RefSeq" id="WP_004041935.1">
    <property type="nucleotide sequence ID" value="NC_013967.1"/>
</dbReference>
<dbReference type="SMR" id="D4GU63"/>
<dbReference type="STRING" id="309800.HVO_2049"/>
<dbReference type="CAZy" id="GT2">
    <property type="family name" value="Glycosyltransferase Family 2"/>
</dbReference>
<dbReference type="PaxDb" id="309800-C498_05536"/>
<dbReference type="EnsemblBacteria" id="ADE02788">
    <property type="protein sequence ID" value="ADE02788"/>
    <property type="gene ID" value="HVO_2049"/>
</dbReference>
<dbReference type="GeneID" id="8926717"/>
<dbReference type="KEGG" id="hvo:HVO_2049"/>
<dbReference type="eggNOG" id="arCOG01383">
    <property type="taxonomic scope" value="Archaea"/>
</dbReference>
<dbReference type="HOGENOM" id="CLU_023845_4_1_2"/>
<dbReference type="OrthoDB" id="46222at2157"/>
<dbReference type="UniPathway" id="UPA00378"/>
<dbReference type="UniPathway" id="UPA00977"/>
<dbReference type="Proteomes" id="UP000008243">
    <property type="component" value="Chromosome"/>
</dbReference>
<dbReference type="Proteomes" id="UP000011532">
    <property type="component" value="Unassembled WGS sequence"/>
</dbReference>
<dbReference type="GO" id="GO:0016757">
    <property type="term" value="F:glycosyltransferase activity"/>
    <property type="evidence" value="ECO:0007669"/>
    <property type="project" value="UniProtKB-KW"/>
</dbReference>
<dbReference type="GO" id="GO:0006486">
    <property type="term" value="P:protein glycosylation"/>
    <property type="evidence" value="ECO:0007669"/>
    <property type="project" value="UniProtKB-UniPathway"/>
</dbReference>
<dbReference type="GO" id="GO:0045232">
    <property type="term" value="P:S-layer organization"/>
    <property type="evidence" value="ECO:0007669"/>
    <property type="project" value="UniProtKB-UniPathway"/>
</dbReference>
<dbReference type="Gene3D" id="3.90.550.10">
    <property type="entry name" value="Spore Coat Polysaccharide Biosynthesis Protein SpsA, Chain A"/>
    <property type="match status" value="1"/>
</dbReference>
<dbReference type="InterPro" id="IPR001173">
    <property type="entry name" value="Glyco_trans_2-like"/>
</dbReference>
<dbReference type="InterPro" id="IPR029044">
    <property type="entry name" value="Nucleotide-diphossugar_trans"/>
</dbReference>
<dbReference type="PANTHER" id="PTHR43179">
    <property type="entry name" value="RHAMNOSYLTRANSFERASE WBBL"/>
    <property type="match status" value="1"/>
</dbReference>
<dbReference type="PANTHER" id="PTHR43179:SF7">
    <property type="entry name" value="RHAMNOSYLTRANSFERASE WBBL"/>
    <property type="match status" value="1"/>
</dbReference>
<dbReference type="Pfam" id="PF00535">
    <property type="entry name" value="Glycos_transf_2"/>
    <property type="match status" value="1"/>
</dbReference>
<dbReference type="SUPFAM" id="SSF53448">
    <property type="entry name" value="Nucleotide-diphospho-sugar transferases"/>
    <property type="match status" value="1"/>
</dbReference>
<organism>
    <name type="scientific">Haloferax volcanii (strain ATCC 29605 / DSM 3757 / JCM 8879 / NBRC 14742 / NCIMB 2012 / VKM B-1768 / DS2)</name>
    <name type="common">Halobacterium volcanii</name>
    <dbReference type="NCBI Taxonomy" id="309800"/>
    <lineage>
        <taxon>Archaea</taxon>
        <taxon>Methanobacteriati</taxon>
        <taxon>Methanobacteriota</taxon>
        <taxon>Stenosarchaea group</taxon>
        <taxon>Halobacteria</taxon>
        <taxon>Halobacteriales</taxon>
        <taxon>Haloferacaceae</taxon>
        <taxon>Haloferax</taxon>
    </lineage>
</organism>
<name>AGL10_HALVD</name>
<gene>
    <name type="primary">agl10</name>
    <name type="ordered locus">HVO_2049</name>
    <name type="ORF">C498_05536</name>
</gene>
<sequence length="307" mass="35296">MPYCLYDNTCKVQQTMLDDLSIIIVNYKSEEDIKNLYSRISGVAEFVVVDNSSSSELRQWCSHDDIHYIDSGGNHGYSGGNNMGIRYSLDELNRESVLVLNPDLEINKEDIRELYTIHQSTNYSIISPRILNREGIPVNESPTPEGTLFRSIGLLPALPGKEHNLKPVDHAHGSCMMISESVFEQIGYLNESFFMYYEEIEFCYRARRENINIGQCQVVDAIHNQPVDQTRFESSYQVYLDFRNRFLASNSIFSKSIDRIQYTTLSILISGWMVVRMLFEKKIEYIAPAIFGALHGIQNRTGKPERM</sequence>